<organism>
    <name type="scientific">Arabidopsis thaliana</name>
    <name type="common">Mouse-ear cress</name>
    <dbReference type="NCBI Taxonomy" id="3702"/>
    <lineage>
        <taxon>Eukaryota</taxon>
        <taxon>Viridiplantae</taxon>
        <taxon>Streptophyta</taxon>
        <taxon>Embryophyta</taxon>
        <taxon>Tracheophyta</taxon>
        <taxon>Spermatophyta</taxon>
        <taxon>Magnoliopsida</taxon>
        <taxon>eudicotyledons</taxon>
        <taxon>Gunneridae</taxon>
        <taxon>Pentapetalae</taxon>
        <taxon>rosids</taxon>
        <taxon>malvids</taxon>
        <taxon>Brassicales</taxon>
        <taxon>Brassicaceae</taxon>
        <taxon>Camelineae</taxon>
        <taxon>Arabidopsis</taxon>
    </lineage>
</organism>
<accession>P42794</accession>
<accession>P42796</accession>
<accession>Q42195</accession>
<accession>Q8LD47</accession>
<accession>Q9LXT1</accession>
<gene>
    <name type="primary">RPL11B</name>
    <name type="ordered locus">At3g58700</name>
    <name type="ORF">T20N10_50</name>
</gene>
<gene>
    <name type="primary">RPL11C</name>
    <name type="synonym">RPL16B</name>
    <name type="ordered locus">At4g18730</name>
    <name type="ORF">F28A21.140</name>
</gene>
<gene>
    <name type="primary">RPL11D</name>
    <name type="ordered locus">At5g45775</name>
    <name type="ORF">MRA19.26</name>
    <name type="ORF">MRA19_21</name>
</gene>
<evidence type="ECO:0000250" key="1">
    <source>
        <dbReference type="UniProtKB" id="P0C0W9"/>
    </source>
</evidence>
<evidence type="ECO:0000303" key="2">
    <source>
    </source>
</evidence>
<evidence type="ECO:0000305" key="3"/>
<name>RL112_ARATH</name>
<dbReference type="EMBL" id="X81798">
    <property type="protein sequence ID" value="CAA57394.1"/>
    <property type="molecule type" value="mRNA"/>
</dbReference>
<dbReference type="EMBL" id="X81800">
    <property type="protein sequence ID" value="CAA57396.1"/>
    <property type="status" value="ALT_SEQ"/>
    <property type="molecule type" value="Genomic_DNA"/>
</dbReference>
<dbReference type="EMBL" id="AL035526">
    <property type="protein sequence ID" value="CAB37458.1"/>
    <property type="molecule type" value="Genomic_DNA"/>
</dbReference>
<dbReference type="EMBL" id="AL161549">
    <property type="protein sequence ID" value="CAB78875.1"/>
    <property type="molecule type" value="Genomic_DNA"/>
</dbReference>
<dbReference type="EMBL" id="AL353032">
    <property type="protein sequence ID" value="CAB88287.1"/>
    <property type="molecule type" value="Genomic_DNA"/>
</dbReference>
<dbReference type="EMBL" id="AB012245">
    <property type="protein sequence ID" value="BAB09220.1"/>
    <property type="molecule type" value="Genomic_DNA"/>
</dbReference>
<dbReference type="EMBL" id="CP002686">
    <property type="protein sequence ID" value="AEE79819.1"/>
    <property type="molecule type" value="Genomic_DNA"/>
</dbReference>
<dbReference type="EMBL" id="CP002687">
    <property type="protein sequence ID" value="AEE84082.1"/>
    <property type="molecule type" value="Genomic_DNA"/>
</dbReference>
<dbReference type="EMBL" id="CP002688">
    <property type="protein sequence ID" value="AED95296.1"/>
    <property type="molecule type" value="Genomic_DNA"/>
</dbReference>
<dbReference type="EMBL" id="CP002688">
    <property type="protein sequence ID" value="AED95297.1"/>
    <property type="molecule type" value="Genomic_DNA"/>
</dbReference>
<dbReference type="EMBL" id="AF326876">
    <property type="protein sequence ID" value="AAG41458.1"/>
    <property type="molecule type" value="mRNA"/>
</dbReference>
<dbReference type="EMBL" id="AF339697">
    <property type="protein sequence ID" value="AAK00379.1"/>
    <property type="molecule type" value="mRNA"/>
</dbReference>
<dbReference type="EMBL" id="AY039570">
    <property type="protein sequence ID" value="AAK62625.1"/>
    <property type="molecule type" value="mRNA"/>
</dbReference>
<dbReference type="EMBL" id="AY129487">
    <property type="protein sequence ID" value="AAM91073.1"/>
    <property type="molecule type" value="mRNA"/>
</dbReference>
<dbReference type="EMBL" id="AF385722">
    <property type="protein sequence ID" value="AAK60313.1"/>
    <property type="molecule type" value="mRNA"/>
</dbReference>
<dbReference type="EMBL" id="AY078021">
    <property type="protein sequence ID" value="AAL77722.1"/>
    <property type="molecule type" value="mRNA"/>
</dbReference>
<dbReference type="EMBL" id="AY085232">
    <property type="protein sequence ID" value="AAM62465.1"/>
    <property type="molecule type" value="mRNA"/>
</dbReference>
<dbReference type="EMBL" id="AY086211">
    <property type="protein sequence ID" value="AAM64289.1"/>
    <property type="molecule type" value="mRNA"/>
</dbReference>
<dbReference type="EMBL" id="AY086300">
    <property type="protein sequence ID" value="AAM64372.1"/>
    <property type="molecule type" value="mRNA"/>
</dbReference>
<dbReference type="EMBL" id="Z29034">
    <property type="protein sequence ID" value="CAA82293.1"/>
    <property type="status" value="ALT_FRAME"/>
    <property type="molecule type" value="mRNA"/>
</dbReference>
<dbReference type="PIR" id="S49033">
    <property type="entry name" value="S49033"/>
</dbReference>
<dbReference type="PIR" id="T49153">
    <property type="entry name" value="T49153"/>
</dbReference>
<dbReference type="RefSeq" id="NP_191429.1">
    <molecule id="P42794-1"/>
    <property type="nucleotide sequence ID" value="NM_115732.4"/>
</dbReference>
<dbReference type="RefSeq" id="NP_567563.1">
    <molecule id="P42794-1"/>
    <property type="nucleotide sequence ID" value="NM_117989.4"/>
</dbReference>
<dbReference type="RefSeq" id="NP_568649.2">
    <molecule id="P42794-1"/>
    <property type="nucleotide sequence ID" value="NM_123945.4"/>
</dbReference>
<dbReference type="RefSeq" id="NP_851137.1">
    <molecule id="P42794-2"/>
    <property type="nucleotide sequence ID" value="NM_180806.1"/>
</dbReference>
<dbReference type="SMR" id="P42794"/>
<dbReference type="BioGRID" id="10354">
    <property type="interactions" value="110"/>
</dbReference>
<dbReference type="BioGRID" id="12900">
    <property type="interactions" value="109"/>
</dbReference>
<dbReference type="BioGRID" id="19866">
    <property type="interactions" value="109"/>
</dbReference>
<dbReference type="FunCoup" id="P42794">
    <property type="interactions" value="3293"/>
</dbReference>
<dbReference type="STRING" id="3702.P42794"/>
<dbReference type="GlyGen" id="P42794">
    <property type="glycosylation" value="1 site"/>
</dbReference>
<dbReference type="iPTMnet" id="P42794"/>
<dbReference type="PaxDb" id="3702-AT3G58700.1"/>
<dbReference type="ProteomicsDB" id="226296">
    <molecule id="P42794-1"/>
</dbReference>
<dbReference type="EnsemblPlants" id="AT3G58700.1">
    <molecule id="P42794-1"/>
    <property type="protein sequence ID" value="AT3G58700.1"/>
    <property type="gene ID" value="AT3G58700"/>
</dbReference>
<dbReference type="EnsemblPlants" id="AT4G18730.1">
    <molecule id="P42794-1"/>
    <property type="protein sequence ID" value="AT4G18730.1"/>
    <property type="gene ID" value="AT4G18730"/>
</dbReference>
<dbReference type="EnsemblPlants" id="AT5G45775.1">
    <molecule id="P42794-2"/>
    <property type="protein sequence ID" value="AT5G45775.1"/>
    <property type="gene ID" value="AT5G45775"/>
</dbReference>
<dbReference type="EnsemblPlants" id="AT5G45775.2">
    <molecule id="P42794-1"/>
    <property type="protein sequence ID" value="AT5G45775.2"/>
    <property type="gene ID" value="AT5G45775"/>
</dbReference>
<dbReference type="GeneID" id="825039"/>
<dbReference type="GeneID" id="827607"/>
<dbReference type="GeneID" id="834617"/>
<dbReference type="Gramene" id="AT3G58700.1">
    <molecule id="P42794-1"/>
    <property type="protein sequence ID" value="AT3G58700.1"/>
    <property type="gene ID" value="AT3G58700"/>
</dbReference>
<dbReference type="Gramene" id="AT4G18730.1">
    <molecule id="P42794-1"/>
    <property type="protein sequence ID" value="AT4G18730.1"/>
    <property type="gene ID" value="AT4G18730"/>
</dbReference>
<dbReference type="Gramene" id="AT5G45775.1">
    <molecule id="P42794-2"/>
    <property type="protein sequence ID" value="AT5G45775.1"/>
    <property type="gene ID" value="AT5G45775"/>
</dbReference>
<dbReference type="Gramene" id="AT5G45775.2">
    <molecule id="P42794-1"/>
    <property type="protein sequence ID" value="AT5G45775.2"/>
    <property type="gene ID" value="AT5G45775"/>
</dbReference>
<dbReference type="KEGG" id="ath:AT3G58700"/>
<dbReference type="KEGG" id="ath:AT4G18730"/>
<dbReference type="KEGG" id="ath:AT5G45775"/>
<dbReference type="Araport" id="AT3G58700"/>
<dbReference type="Araport" id="AT4G18730"/>
<dbReference type="Araport" id="AT5G45775"/>
<dbReference type="TAIR" id="AT3G58700"/>
<dbReference type="TAIR" id="AT4G18730">
    <property type="gene designation" value="RPL16B"/>
</dbReference>
<dbReference type="TAIR" id="AT5G45775"/>
<dbReference type="eggNOG" id="KOG0397">
    <property type="taxonomic scope" value="Eukaryota"/>
</dbReference>
<dbReference type="HOGENOM" id="CLU_061015_3_0_1"/>
<dbReference type="InParanoid" id="P42794"/>
<dbReference type="OMA" id="NPMKELK"/>
<dbReference type="OrthoDB" id="1734943at2759"/>
<dbReference type="PhylomeDB" id="P42794"/>
<dbReference type="PRO" id="PR:P42794"/>
<dbReference type="Proteomes" id="UP000006548">
    <property type="component" value="Chromosome 3"/>
</dbReference>
<dbReference type="Proteomes" id="UP000006548">
    <property type="component" value="Chromosome 4"/>
</dbReference>
<dbReference type="Proteomes" id="UP000006548">
    <property type="component" value="Chromosome 5"/>
</dbReference>
<dbReference type="ExpressionAtlas" id="P42794">
    <property type="expression patterns" value="baseline and differential"/>
</dbReference>
<dbReference type="GO" id="GO:0005829">
    <property type="term" value="C:cytosol"/>
    <property type="evidence" value="ECO:0007005"/>
    <property type="project" value="TAIR"/>
</dbReference>
<dbReference type="GO" id="GO:0022625">
    <property type="term" value="C:cytosolic large ribosomal subunit"/>
    <property type="evidence" value="ECO:0007005"/>
    <property type="project" value="TAIR"/>
</dbReference>
<dbReference type="GO" id="GO:0022626">
    <property type="term" value="C:cytosolic ribosome"/>
    <property type="evidence" value="ECO:0007005"/>
    <property type="project" value="TAIR"/>
</dbReference>
<dbReference type="GO" id="GO:0005634">
    <property type="term" value="C:nucleus"/>
    <property type="evidence" value="ECO:0007669"/>
    <property type="project" value="UniProtKB-SubCell"/>
</dbReference>
<dbReference type="GO" id="GO:0009536">
    <property type="term" value="C:plastid"/>
    <property type="evidence" value="ECO:0007005"/>
    <property type="project" value="TAIR"/>
</dbReference>
<dbReference type="GO" id="GO:0005773">
    <property type="term" value="C:vacuole"/>
    <property type="evidence" value="ECO:0007005"/>
    <property type="project" value="TAIR"/>
</dbReference>
<dbReference type="GO" id="GO:0003729">
    <property type="term" value="F:mRNA binding"/>
    <property type="evidence" value="ECO:0000314"/>
    <property type="project" value="TAIR"/>
</dbReference>
<dbReference type="GO" id="GO:0019843">
    <property type="term" value="F:rRNA binding"/>
    <property type="evidence" value="ECO:0007669"/>
    <property type="project" value="UniProtKB-KW"/>
</dbReference>
<dbReference type="GO" id="GO:0003735">
    <property type="term" value="F:structural constituent of ribosome"/>
    <property type="evidence" value="ECO:0000314"/>
    <property type="project" value="CAFA"/>
</dbReference>
<dbReference type="GO" id="GO:0006412">
    <property type="term" value="P:translation"/>
    <property type="evidence" value="ECO:0000304"/>
    <property type="project" value="TAIR"/>
</dbReference>
<dbReference type="FunFam" id="3.30.1440.10:FF:000002">
    <property type="entry name" value="60S ribosomal protein L11"/>
    <property type="match status" value="1"/>
</dbReference>
<dbReference type="Gene3D" id="3.30.1440.10">
    <property type="match status" value="1"/>
</dbReference>
<dbReference type="InterPro" id="IPR002132">
    <property type="entry name" value="Ribosomal_uL5"/>
</dbReference>
<dbReference type="InterPro" id="IPR031309">
    <property type="entry name" value="Ribosomal_uL5_C"/>
</dbReference>
<dbReference type="InterPro" id="IPR020929">
    <property type="entry name" value="Ribosomal_uL5_CS"/>
</dbReference>
<dbReference type="InterPro" id="IPR022803">
    <property type="entry name" value="Ribosomal_uL5_dom_sf"/>
</dbReference>
<dbReference type="InterPro" id="IPR031310">
    <property type="entry name" value="Ribosomal_uL5_N"/>
</dbReference>
<dbReference type="NCBIfam" id="NF003258">
    <property type="entry name" value="PRK04219.1"/>
    <property type="match status" value="1"/>
</dbReference>
<dbReference type="PANTHER" id="PTHR11994">
    <property type="entry name" value="60S RIBOSOMAL PROTEIN L11-RELATED"/>
    <property type="match status" value="1"/>
</dbReference>
<dbReference type="Pfam" id="PF00281">
    <property type="entry name" value="Ribosomal_L5"/>
    <property type="match status" value="1"/>
</dbReference>
<dbReference type="Pfam" id="PF00673">
    <property type="entry name" value="Ribosomal_L5_C"/>
    <property type="match status" value="1"/>
</dbReference>
<dbReference type="PIRSF" id="PIRSF002161">
    <property type="entry name" value="Ribosomal_L5"/>
    <property type="match status" value="1"/>
</dbReference>
<dbReference type="SUPFAM" id="SSF55282">
    <property type="entry name" value="RL5-like"/>
    <property type="match status" value="1"/>
</dbReference>
<dbReference type="PROSITE" id="PS00358">
    <property type="entry name" value="RIBOSOMAL_L5"/>
    <property type="match status" value="1"/>
</dbReference>
<protein>
    <recommendedName>
        <fullName evidence="2">Large ribosomal subunit protein uL5y/uL5x/uL5w</fullName>
    </recommendedName>
    <alternativeName>
        <fullName>60S ribosomal protein L11-2</fullName>
    </alternativeName>
    <alternativeName>
        <fullName>L16</fullName>
    </alternativeName>
</protein>
<proteinExistence type="evidence at transcript level"/>
<feature type="chain" id="PRO_0000125096" description="Large ribosomal subunit protein uL5y/uL5x/uL5w">
    <location>
        <begin position="1"/>
        <end position="182"/>
    </location>
</feature>
<feature type="splice variant" id="VSP_008901" description="In isoform 2." evidence="3">
    <location>
        <begin position="1"/>
        <end position="10"/>
    </location>
</feature>
<feature type="sequence conflict" description="In Ref. 8; CAA82293." evidence="3" ref="8">
    <location>
        <position position="46"/>
    </location>
</feature>
<feature type="sequence conflict" description="In Ref. 1; CAA57394." evidence="3" ref="1">
    <original>D</original>
    <variation>E</variation>
    <location>
        <position position="128"/>
    </location>
</feature>
<sequence>MASEKKLSNPMRDIKVQKLVLNISVGESGDRLTRASKVLEQLSGQTPVFSKARYTVRSFGIRRNEKIACYVTVRGEKAMQLLESGLKVKEYELLRRNFSDTGCFGFGIQEHIDLGIKYDPSTGIYGMDFYVVLERPGYRVARRRRCKTRVGIQHRVTKDDAMKWFQVKYEGVILNKSQNITG</sequence>
<reference key="1">
    <citation type="journal article" date="1995" name="Plant J.">
        <title>Developmental regulation of ribosomal protein L16 genes in Arabidopsis thaliana.</title>
        <authorList>
            <person name="Williams M.E."/>
            <person name="Sussex I.M."/>
        </authorList>
    </citation>
    <scope>NUCLEOTIDE SEQUENCE [GENOMIC DNA / MRNA] (RPL11C)</scope>
    <source>
        <strain>cv. Columbia</strain>
        <strain>cv. Landsberg erecta</strain>
    </source>
</reference>
<reference key="2">
    <citation type="journal article" date="1999" name="Nature">
        <title>Sequence and analysis of chromosome 4 of the plant Arabidopsis thaliana.</title>
        <authorList>
            <person name="Mayer K.F.X."/>
            <person name="Schueller C."/>
            <person name="Wambutt R."/>
            <person name="Murphy G."/>
            <person name="Volckaert G."/>
            <person name="Pohl T."/>
            <person name="Duesterhoeft A."/>
            <person name="Stiekema W."/>
            <person name="Entian K.-D."/>
            <person name="Terryn N."/>
            <person name="Harris B."/>
            <person name="Ansorge W."/>
            <person name="Brandt P."/>
            <person name="Grivell L.A."/>
            <person name="Rieger M."/>
            <person name="Weichselgartner M."/>
            <person name="de Simone V."/>
            <person name="Obermaier B."/>
            <person name="Mache R."/>
            <person name="Mueller M."/>
            <person name="Kreis M."/>
            <person name="Delseny M."/>
            <person name="Puigdomenech P."/>
            <person name="Watson M."/>
            <person name="Schmidtheini T."/>
            <person name="Reichert B."/>
            <person name="Portetelle D."/>
            <person name="Perez-Alonso M."/>
            <person name="Boutry M."/>
            <person name="Bancroft I."/>
            <person name="Vos P."/>
            <person name="Hoheisel J."/>
            <person name="Zimmermann W."/>
            <person name="Wedler H."/>
            <person name="Ridley P."/>
            <person name="Langham S.-A."/>
            <person name="McCullagh B."/>
            <person name="Bilham L."/>
            <person name="Robben J."/>
            <person name="van der Schueren J."/>
            <person name="Grymonprez B."/>
            <person name="Chuang Y.-J."/>
            <person name="Vandenbussche F."/>
            <person name="Braeken M."/>
            <person name="Weltjens I."/>
            <person name="Voet M."/>
            <person name="Bastiaens I."/>
            <person name="Aert R."/>
            <person name="Defoor E."/>
            <person name="Weitzenegger T."/>
            <person name="Bothe G."/>
            <person name="Ramsperger U."/>
            <person name="Hilbert H."/>
            <person name="Braun M."/>
            <person name="Holzer E."/>
            <person name="Brandt A."/>
            <person name="Peters S."/>
            <person name="van Staveren M."/>
            <person name="Dirkse W."/>
            <person name="Mooijman P."/>
            <person name="Klein Lankhorst R."/>
            <person name="Rose M."/>
            <person name="Hauf J."/>
            <person name="Koetter P."/>
            <person name="Berneiser S."/>
            <person name="Hempel S."/>
            <person name="Feldpausch M."/>
            <person name="Lamberth S."/>
            <person name="Van den Daele H."/>
            <person name="De Keyser A."/>
            <person name="Buysshaert C."/>
            <person name="Gielen J."/>
            <person name="Villarroel R."/>
            <person name="De Clercq R."/>
            <person name="van Montagu M."/>
            <person name="Rogers J."/>
            <person name="Cronin A."/>
            <person name="Quail M.A."/>
            <person name="Bray-Allen S."/>
            <person name="Clark L."/>
            <person name="Doggett J."/>
            <person name="Hall S."/>
            <person name="Kay M."/>
            <person name="Lennard N."/>
            <person name="McLay K."/>
            <person name="Mayes R."/>
            <person name="Pettett A."/>
            <person name="Rajandream M.A."/>
            <person name="Lyne M."/>
            <person name="Benes V."/>
            <person name="Rechmann S."/>
            <person name="Borkova D."/>
            <person name="Bloecker H."/>
            <person name="Scharfe M."/>
            <person name="Grimm M."/>
            <person name="Loehnert T.-H."/>
            <person name="Dose S."/>
            <person name="de Haan M."/>
            <person name="Maarse A.C."/>
            <person name="Schaefer M."/>
            <person name="Mueller-Auer S."/>
            <person name="Gabel C."/>
            <person name="Fuchs M."/>
            <person name="Fartmann B."/>
            <person name="Granderath K."/>
            <person name="Dauner D."/>
            <person name="Herzl A."/>
            <person name="Neumann S."/>
            <person name="Argiriou A."/>
            <person name="Vitale D."/>
            <person name="Liguori R."/>
            <person name="Piravandi E."/>
            <person name="Massenet O."/>
            <person name="Quigley F."/>
            <person name="Clabauld G."/>
            <person name="Muendlein A."/>
            <person name="Felber R."/>
            <person name="Schnabl S."/>
            <person name="Hiller R."/>
            <person name="Schmidt W."/>
            <person name="Lecharny A."/>
            <person name="Aubourg S."/>
            <person name="Chefdor F."/>
            <person name="Cooke R."/>
            <person name="Berger C."/>
            <person name="Monfort A."/>
            <person name="Casacuberta E."/>
            <person name="Gibbons T."/>
            <person name="Weber N."/>
            <person name="Vandenbol M."/>
            <person name="Bargues M."/>
            <person name="Terol J."/>
            <person name="Torres A."/>
            <person name="Perez-Perez A."/>
            <person name="Purnelle B."/>
            <person name="Bent E."/>
            <person name="Johnson S."/>
            <person name="Tacon D."/>
            <person name="Jesse T."/>
            <person name="Heijnen L."/>
            <person name="Schwarz S."/>
            <person name="Scholler P."/>
            <person name="Heber S."/>
            <person name="Francs P."/>
            <person name="Bielke C."/>
            <person name="Frishman D."/>
            <person name="Haase D."/>
            <person name="Lemcke K."/>
            <person name="Mewes H.-W."/>
            <person name="Stocker S."/>
            <person name="Zaccaria P."/>
            <person name="Bevan M."/>
            <person name="Wilson R.K."/>
            <person name="de la Bastide M."/>
            <person name="Habermann K."/>
            <person name="Parnell L."/>
            <person name="Dedhia N."/>
            <person name="Gnoj L."/>
            <person name="Schutz K."/>
            <person name="Huang E."/>
            <person name="Spiegel L."/>
            <person name="Sekhon M."/>
            <person name="Murray J."/>
            <person name="Sheet P."/>
            <person name="Cordes M."/>
            <person name="Abu-Threideh J."/>
            <person name="Stoneking T."/>
            <person name="Kalicki J."/>
            <person name="Graves T."/>
            <person name="Harmon G."/>
            <person name="Edwards J."/>
            <person name="Latreille P."/>
            <person name="Courtney L."/>
            <person name="Cloud J."/>
            <person name="Abbott A."/>
            <person name="Scott K."/>
            <person name="Johnson D."/>
            <person name="Minx P."/>
            <person name="Bentley D."/>
            <person name="Fulton B."/>
            <person name="Miller N."/>
            <person name="Greco T."/>
            <person name="Kemp K."/>
            <person name="Kramer J."/>
            <person name="Fulton L."/>
            <person name="Mardis E."/>
            <person name="Dante M."/>
            <person name="Pepin K."/>
            <person name="Hillier L.W."/>
            <person name="Nelson J."/>
            <person name="Spieth J."/>
            <person name="Ryan E."/>
            <person name="Andrews S."/>
            <person name="Geisel C."/>
            <person name="Layman D."/>
            <person name="Du H."/>
            <person name="Ali J."/>
            <person name="Berghoff A."/>
            <person name="Jones K."/>
            <person name="Drone K."/>
            <person name="Cotton M."/>
            <person name="Joshu C."/>
            <person name="Antonoiu B."/>
            <person name="Zidanic M."/>
            <person name="Strong C."/>
            <person name="Sun H."/>
            <person name="Lamar B."/>
            <person name="Yordan C."/>
            <person name="Ma P."/>
            <person name="Zhong J."/>
            <person name="Preston R."/>
            <person name="Vil D."/>
            <person name="Shekher M."/>
            <person name="Matero A."/>
            <person name="Shah R."/>
            <person name="Swaby I.K."/>
            <person name="O'Shaughnessy A."/>
            <person name="Rodriguez M."/>
            <person name="Hoffman J."/>
            <person name="Till S."/>
            <person name="Granat S."/>
            <person name="Shohdy N."/>
            <person name="Hasegawa A."/>
            <person name="Hameed A."/>
            <person name="Lodhi M."/>
            <person name="Johnson A."/>
            <person name="Chen E."/>
            <person name="Marra M.A."/>
            <person name="Martienssen R."/>
            <person name="McCombie W.R."/>
        </authorList>
    </citation>
    <scope>NUCLEOTIDE SEQUENCE [LARGE SCALE GENOMIC DNA] (RPL11C)</scope>
    <source>
        <strain>cv. Columbia</strain>
    </source>
</reference>
<reference key="3">
    <citation type="journal article" date="2000" name="Nature">
        <title>Sequence and analysis of chromosome 3 of the plant Arabidopsis thaliana.</title>
        <authorList>
            <person name="Salanoubat M."/>
            <person name="Lemcke K."/>
            <person name="Rieger M."/>
            <person name="Ansorge W."/>
            <person name="Unseld M."/>
            <person name="Fartmann B."/>
            <person name="Valle G."/>
            <person name="Bloecker H."/>
            <person name="Perez-Alonso M."/>
            <person name="Obermaier B."/>
            <person name="Delseny M."/>
            <person name="Boutry M."/>
            <person name="Grivell L.A."/>
            <person name="Mache R."/>
            <person name="Puigdomenech P."/>
            <person name="De Simone V."/>
            <person name="Choisne N."/>
            <person name="Artiguenave F."/>
            <person name="Robert C."/>
            <person name="Brottier P."/>
            <person name="Wincker P."/>
            <person name="Cattolico L."/>
            <person name="Weissenbach J."/>
            <person name="Saurin W."/>
            <person name="Quetier F."/>
            <person name="Schaefer M."/>
            <person name="Mueller-Auer S."/>
            <person name="Gabel C."/>
            <person name="Fuchs M."/>
            <person name="Benes V."/>
            <person name="Wurmbach E."/>
            <person name="Drzonek H."/>
            <person name="Erfle H."/>
            <person name="Jordan N."/>
            <person name="Bangert S."/>
            <person name="Wiedelmann R."/>
            <person name="Kranz H."/>
            <person name="Voss H."/>
            <person name="Holland R."/>
            <person name="Brandt P."/>
            <person name="Nyakatura G."/>
            <person name="Vezzi A."/>
            <person name="D'Angelo M."/>
            <person name="Pallavicini A."/>
            <person name="Toppo S."/>
            <person name="Simionati B."/>
            <person name="Conrad A."/>
            <person name="Hornischer K."/>
            <person name="Kauer G."/>
            <person name="Loehnert T.-H."/>
            <person name="Nordsiek G."/>
            <person name="Reichelt J."/>
            <person name="Scharfe M."/>
            <person name="Schoen O."/>
            <person name="Bargues M."/>
            <person name="Terol J."/>
            <person name="Climent J."/>
            <person name="Navarro P."/>
            <person name="Collado C."/>
            <person name="Perez-Perez A."/>
            <person name="Ottenwaelder B."/>
            <person name="Duchemin D."/>
            <person name="Cooke R."/>
            <person name="Laudie M."/>
            <person name="Berger-Llauro C."/>
            <person name="Purnelle B."/>
            <person name="Masuy D."/>
            <person name="de Haan M."/>
            <person name="Maarse A.C."/>
            <person name="Alcaraz J.-P."/>
            <person name="Cottet A."/>
            <person name="Casacuberta E."/>
            <person name="Monfort A."/>
            <person name="Argiriou A."/>
            <person name="Flores M."/>
            <person name="Liguori R."/>
            <person name="Vitale D."/>
            <person name="Mannhaupt G."/>
            <person name="Haase D."/>
            <person name="Schoof H."/>
            <person name="Rudd S."/>
            <person name="Zaccaria P."/>
            <person name="Mewes H.-W."/>
            <person name="Mayer K.F.X."/>
            <person name="Kaul S."/>
            <person name="Town C.D."/>
            <person name="Koo H.L."/>
            <person name="Tallon L.J."/>
            <person name="Jenkins J."/>
            <person name="Rooney T."/>
            <person name="Rizzo M."/>
            <person name="Walts A."/>
            <person name="Utterback T."/>
            <person name="Fujii C.Y."/>
            <person name="Shea T.P."/>
            <person name="Creasy T.H."/>
            <person name="Haas B."/>
            <person name="Maiti R."/>
            <person name="Wu D."/>
            <person name="Peterson J."/>
            <person name="Van Aken S."/>
            <person name="Pai G."/>
            <person name="Militscher J."/>
            <person name="Sellers P."/>
            <person name="Gill J.E."/>
            <person name="Feldblyum T.V."/>
            <person name="Preuss D."/>
            <person name="Lin X."/>
            <person name="Nierman W.C."/>
            <person name="Salzberg S.L."/>
            <person name="White O."/>
            <person name="Venter J.C."/>
            <person name="Fraser C.M."/>
            <person name="Kaneko T."/>
            <person name="Nakamura Y."/>
            <person name="Sato S."/>
            <person name="Kato T."/>
            <person name="Asamizu E."/>
            <person name="Sasamoto S."/>
            <person name="Kimura T."/>
            <person name="Idesawa K."/>
            <person name="Kawashima K."/>
            <person name="Kishida Y."/>
            <person name="Kiyokawa C."/>
            <person name="Kohara M."/>
            <person name="Matsumoto M."/>
            <person name="Matsuno A."/>
            <person name="Muraki A."/>
            <person name="Nakayama S."/>
            <person name="Nakazaki N."/>
            <person name="Shinpo S."/>
            <person name="Takeuchi C."/>
            <person name="Wada T."/>
            <person name="Watanabe A."/>
            <person name="Yamada M."/>
            <person name="Yasuda M."/>
            <person name="Tabata S."/>
        </authorList>
    </citation>
    <scope>NUCLEOTIDE SEQUENCE [LARGE SCALE GENOMIC DNA] (RPL11B)</scope>
    <source>
        <strain>cv. Columbia</strain>
    </source>
</reference>
<reference key="4">
    <citation type="journal article" date="1998" name="DNA Res.">
        <title>Structural analysis of Arabidopsis thaliana chromosome 5. VI. Sequence features of the regions of 1,367,185 bp covered by 19 physically assigned P1 and TAC clones.</title>
        <authorList>
            <person name="Kotani H."/>
            <person name="Nakamura Y."/>
            <person name="Sato S."/>
            <person name="Asamizu E."/>
            <person name="Kaneko T."/>
            <person name="Miyajima N."/>
            <person name="Tabata S."/>
        </authorList>
    </citation>
    <scope>NUCLEOTIDE SEQUENCE [LARGE SCALE GENOMIC DNA] (RPL11D)</scope>
    <source>
        <strain>cv. Columbia</strain>
    </source>
</reference>
<reference key="5">
    <citation type="journal article" date="2017" name="Plant J.">
        <title>Araport11: a complete reannotation of the Arabidopsis thaliana reference genome.</title>
        <authorList>
            <person name="Cheng C.Y."/>
            <person name="Krishnakumar V."/>
            <person name="Chan A.P."/>
            <person name="Thibaud-Nissen F."/>
            <person name="Schobel S."/>
            <person name="Town C.D."/>
        </authorList>
    </citation>
    <scope>GENOME REANNOTATION</scope>
    <source>
        <strain>cv. Columbia</strain>
    </source>
</reference>
<reference key="6">
    <citation type="journal article" date="2003" name="Science">
        <title>Empirical analysis of transcriptional activity in the Arabidopsis genome.</title>
        <authorList>
            <person name="Yamada K."/>
            <person name="Lim J."/>
            <person name="Dale J.M."/>
            <person name="Chen H."/>
            <person name="Shinn P."/>
            <person name="Palm C.J."/>
            <person name="Southwick A.M."/>
            <person name="Wu H.C."/>
            <person name="Kim C.J."/>
            <person name="Nguyen M."/>
            <person name="Pham P.K."/>
            <person name="Cheuk R.F."/>
            <person name="Karlin-Newmann G."/>
            <person name="Liu S.X."/>
            <person name="Lam B."/>
            <person name="Sakano H."/>
            <person name="Wu T."/>
            <person name="Yu G."/>
            <person name="Miranda M."/>
            <person name="Quach H.L."/>
            <person name="Tripp M."/>
            <person name="Chang C.H."/>
            <person name="Lee J.M."/>
            <person name="Toriumi M.J."/>
            <person name="Chan M.M."/>
            <person name="Tang C.C."/>
            <person name="Onodera C.S."/>
            <person name="Deng J.M."/>
            <person name="Akiyama K."/>
            <person name="Ansari Y."/>
            <person name="Arakawa T."/>
            <person name="Banh J."/>
            <person name="Banno F."/>
            <person name="Bowser L."/>
            <person name="Brooks S.Y."/>
            <person name="Carninci P."/>
            <person name="Chao Q."/>
            <person name="Choy N."/>
            <person name="Enju A."/>
            <person name="Goldsmith A.D."/>
            <person name="Gurjal M."/>
            <person name="Hansen N.F."/>
            <person name="Hayashizaki Y."/>
            <person name="Johnson-Hopson C."/>
            <person name="Hsuan V.W."/>
            <person name="Iida K."/>
            <person name="Karnes M."/>
            <person name="Khan S."/>
            <person name="Koesema E."/>
            <person name="Ishida J."/>
            <person name="Jiang P.X."/>
            <person name="Jones T."/>
            <person name="Kawai J."/>
            <person name="Kamiya A."/>
            <person name="Meyers C."/>
            <person name="Nakajima M."/>
            <person name="Narusaka M."/>
            <person name="Seki M."/>
            <person name="Sakurai T."/>
            <person name="Satou M."/>
            <person name="Tamse R."/>
            <person name="Vaysberg M."/>
            <person name="Wallender E.K."/>
            <person name="Wong C."/>
            <person name="Yamamura Y."/>
            <person name="Yuan S."/>
            <person name="Shinozaki K."/>
            <person name="Davis R.W."/>
            <person name="Theologis A."/>
            <person name="Ecker J.R."/>
        </authorList>
    </citation>
    <scope>NUCLEOTIDE SEQUENCE [LARGE SCALE MRNA] (RPL11C AND RPL11D; ISOFORM 1)</scope>
    <source>
        <strain>cv. Columbia</strain>
    </source>
</reference>
<reference key="7">
    <citation type="submission" date="2002-03" db="EMBL/GenBank/DDBJ databases">
        <title>Full-length cDNA from Arabidopsis thaliana.</title>
        <authorList>
            <person name="Brover V.V."/>
            <person name="Troukhan M.E."/>
            <person name="Alexandrov N.A."/>
            <person name="Lu Y.-P."/>
            <person name="Flavell R.B."/>
            <person name="Feldmann K.A."/>
        </authorList>
    </citation>
    <scope>NUCLEOTIDE SEQUENCE [LARGE SCALE MRNA] (RPL11B; RPL11C AND RPL11D; ISOFORM 2)</scope>
</reference>
<reference key="8">
    <citation type="journal article" date="1996" name="Plant J.">
        <title>Further progress towards a catalogue of all Arabidopsis genes: analysis of a set of 5000 non-redundant ESTs.</title>
        <authorList>
            <person name="Cooke R."/>
            <person name="Raynal M."/>
            <person name="Laudie M."/>
            <person name="Grellet F."/>
            <person name="Delseny M."/>
            <person name="Morris P.-C."/>
            <person name="Guerrier D."/>
            <person name="Giraudat J."/>
            <person name="Quigley F."/>
            <person name="Clabault G."/>
            <person name="Li Y.-F."/>
            <person name="Mache R."/>
            <person name="Krivitzky M."/>
            <person name="Gy I.J.-J."/>
            <person name="Kreis M."/>
            <person name="Lecharny A."/>
            <person name="Parmentier Y."/>
            <person name="Marbach J."/>
            <person name="Fleck J."/>
            <person name="Clement B."/>
            <person name="Philipps G."/>
            <person name="Herve C."/>
            <person name="Bardet C."/>
            <person name="Tremousaygue D."/>
            <person name="Lescure B."/>
            <person name="Lacomme C."/>
            <person name="Roby D."/>
            <person name="Jourjon M.-F."/>
            <person name="Chabrier P."/>
            <person name="Charpenteau J.-L."/>
            <person name="Desprez T."/>
            <person name="Amselem J."/>
            <person name="Chiapello H."/>
            <person name="Hoefte H."/>
        </authorList>
    </citation>
    <scope>NUCLEOTIDE SEQUENCE [LARGE SCALE MRNA] OF 1-85 (RPL11D; ISOFORM 1)</scope>
    <source>
        <strain>cv. Columbia</strain>
        <tissue>Shoot</tissue>
    </source>
</reference>
<reference key="9">
    <citation type="journal article" date="2001" name="Plant Physiol.">
        <title>The organization of cytoplasmic ribosomal protein genes in the Arabidopsis genome.</title>
        <authorList>
            <person name="Barakat A."/>
            <person name="Szick-Miranda K."/>
            <person name="Chang I.-F."/>
            <person name="Guyot R."/>
            <person name="Blanc G."/>
            <person name="Cooke R."/>
            <person name="Delseny M."/>
            <person name="Bailey-Serres J."/>
        </authorList>
    </citation>
    <scope>GENE FAMILY ORGANIZATION</scope>
    <scope>NOMENCLATURE</scope>
</reference>
<reference key="10">
    <citation type="journal article" date="2023" name="Plant Cell">
        <title>An updated nomenclature for plant ribosomal protein genes.</title>
        <authorList>
            <person name="Scarpin M.R."/>
            <person name="Busche M."/>
            <person name="Martinez R.E."/>
            <person name="Harper L.C."/>
            <person name="Reiser L."/>
            <person name="Szakonyi D."/>
            <person name="Merchante C."/>
            <person name="Lan T."/>
            <person name="Xiong W."/>
            <person name="Mo B."/>
            <person name="Tang G."/>
            <person name="Chen X."/>
            <person name="Bailey-Serres J."/>
            <person name="Browning K.S."/>
            <person name="Brunkard J.O."/>
        </authorList>
    </citation>
    <scope>NOMENCLATURE</scope>
</reference>
<keyword id="KW-0025">Alternative splicing</keyword>
<keyword id="KW-0963">Cytoplasm</keyword>
<keyword id="KW-0539">Nucleus</keyword>
<keyword id="KW-1185">Reference proteome</keyword>
<keyword id="KW-0687">Ribonucleoprotein</keyword>
<keyword id="KW-0689">Ribosomal protein</keyword>
<keyword id="KW-0694">RNA-binding</keyword>
<keyword id="KW-0699">rRNA-binding</keyword>
<comment type="function">
    <text evidence="1">Component of the ribosome, a large ribonucleoprotein complex responsible for the synthesis of proteins in the cell. The small ribosomal subunit (SSU) binds messenger RNAs (mRNAs) and translates the encoded message by selecting cognate aminoacyl-transfer RNA (tRNA) molecules. The large subunit (LSU) contains the ribosomal catalytic site termed the peptidyl transferase center (PTC), which catalyzes the formation of peptide bonds, thereby polymerizing the amino acids delivered by tRNAs into a polypeptide chain. The nascent polypeptides leave the ribosome through a tunnel in the LSU and interact with protein factors that function in enzymatic processing, targeting, and the membrane insertion of nascent chains at the exit of the ribosomal tunnel.</text>
</comment>
<comment type="subunit">
    <text evidence="1">Component of the large ribosomal subunit.</text>
</comment>
<comment type="subcellular location">
    <subcellularLocation>
        <location evidence="1">Nucleus</location>
    </subcellularLocation>
    <subcellularLocation>
        <location evidence="1">Cytoplasm</location>
    </subcellularLocation>
</comment>
<comment type="alternative products">
    <event type="alternative splicing"/>
    <isoform>
        <id>P42794-1</id>
        <name>1</name>
        <sequence type="displayed"/>
    </isoform>
    <isoform>
        <id>P42794-2</id>
        <name>2</name>
        <sequence type="described" ref="VSP_008901"/>
    </isoform>
</comment>
<comment type="miscellaneous">
    <text>There are four genes for RPL11 in A.thaliana.</text>
</comment>
<comment type="miscellaneous">
    <molecule>Isoform 2</molecule>
    <text evidence="3">Shown to be produced only by RPL11D so far.</text>
</comment>
<comment type="similarity">
    <text evidence="3">Belongs to the universal ribosomal protein uL5 family.</text>
</comment>
<comment type="sequence caution" evidence="3">
    <conflict type="erroneous gene model prediction">
        <sequence resource="EMBL-CDS" id="CAA57396"/>
    </conflict>
</comment>
<comment type="sequence caution" evidence="3">
    <conflict type="frameshift">
        <sequence resource="EMBL-CDS" id="CAA82293"/>
    </conflict>
</comment>